<name>E1B55_ADE41</name>
<feature type="chain" id="PRO_0000221729" description="E1B 55 kDa protein">
    <location>
        <begin position="1"/>
        <end position="472"/>
    </location>
</feature>
<feature type="region of interest" description="Disordered" evidence="3">
    <location>
        <begin position="1"/>
        <end position="90"/>
    </location>
</feature>
<feature type="compositionally biased region" description="Low complexity" evidence="3">
    <location>
        <begin position="32"/>
        <end position="44"/>
    </location>
</feature>
<feature type="compositionally biased region" description="Gly residues" evidence="3">
    <location>
        <begin position="45"/>
        <end position="57"/>
    </location>
</feature>
<feature type="modified residue" description="Phosphoserine" evidence="1">
    <location>
        <position position="468"/>
    </location>
</feature>
<feature type="modified residue" description="Phosphoserine" evidence="1">
    <location>
        <position position="469"/>
    </location>
</feature>
<feature type="sequence conflict" description="In Ref. 2." evidence="4" ref="2">
    <location>
        <begin position="54"/>
        <end position="55"/>
    </location>
</feature>
<feature type="sequence conflict" description="In Ref. 2; AAA42475." evidence="4" ref="2">
    <original>TV</original>
    <variation>IL</variation>
    <location>
        <begin position="172"/>
        <end position="173"/>
    </location>
</feature>
<feature type="sequence conflict" description="In Ref. 2; AAA42475." evidence="4" ref="2">
    <original>S</original>
    <variation>P</variation>
    <location>
        <position position="234"/>
    </location>
</feature>
<keyword id="KW-0244">Early protein</keyword>
<keyword id="KW-1035">Host cytoplasm</keyword>
<keyword id="KW-1048">Host nucleus</keyword>
<keyword id="KW-0945">Host-virus interaction</keyword>
<keyword id="KW-1119">Modulation of host cell apoptosis by virus</keyword>
<keyword id="KW-0597">Phosphoprotein</keyword>
<reference key="1">
    <citation type="journal article" date="1987" name="Gene">
        <title>Structure and organization of the left-terminal DNA regions of fastidious adenovirus types 40 and 41.</title>
        <authorList>
            <person name="van Loon A.E."/>
            <person name="Ligtenberg M."/>
            <person name="Reemst A.M.C.B."/>
            <person name="Sussenbach J.S."/>
            <person name="Rozijn T.H."/>
        </authorList>
    </citation>
    <scope>NUCLEOTIDE SEQUENCE [MRNA]</scope>
</reference>
<reference key="2">
    <citation type="journal article" date="1992" name="Virology">
        <title>The E1B transcription map of the enteric adenovirus type 41.</title>
        <authorList>
            <person name="Allard A."/>
            <person name="Wadell G."/>
        </authorList>
    </citation>
    <scope>NUCLEOTIDE SEQUENCE [GENOMIC DNA]</scope>
</reference>
<proteinExistence type="evidence at transcript level"/>
<dbReference type="EMBL" id="M18289">
    <property type="protein sequence ID" value="AAA42452.1"/>
    <property type="molecule type" value="mRNA"/>
</dbReference>
<dbReference type="EMBL" id="M87544">
    <property type="protein sequence ID" value="AAA42475.1"/>
    <property type="molecule type" value="Genomic_DNA"/>
</dbReference>
<dbReference type="PIR" id="F27333">
    <property type="entry name" value="WMADF6"/>
</dbReference>
<dbReference type="SMR" id="P10546"/>
<dbReference type="GO" id="GO:0030430">
    <property type="term" value="C:host cell cytoplasm"/>
    <property type="evidence" value="ECO:0000250"/>
    <property type="project" value="UniProtKB"/>
</dbReference>
<dbReference type="GO" id="GO:0042025">
    <property type="term" value="C:host cell nucleus"/>
    <property type="evidence" value="ECO:0007669"/>
    <property type="project" value="UniProtKB-SubCell"/>
</dbReference>
<dbReference type="GO" id="GO:1990756">
    <property type="term" value="F:ubiquitin-like ligase-substrate adaptor activity"/>
    <property type="evidence" value="ECO:0000250"/>
    <property type="project" value="UniProtKB"/>
</dbReference>
<dbReference type="GO" id="GO:0052150">
    <property type="term" value="P:symbiont-mediated perturbation of host apoptosis"/>
    <property type="evidence" value="ECO:0007669"/>
    <property type="project" value="UniProtKB-KW"/>
</dbReference>
<dbReference type="GO" id="GO:0039648">
    <property type="term" value="P:symbiont-mediated perturbation of host ubiquitin-like protein modification"/>
    <property type="evidence" value="ECO:0000250"/>
    <property type="project" value="UniProtKB"/>
</dbReference>
<dbReference type="InterPro" id="IPR006717">
    <property type="entry name" value="Adeno_E1B_55K_N"/>
</dbReference>
<dbReference type="InterPro" id="IPR002612">
    <property type="entry name" value="Adeno_E1B_55kDa"/>
</dbReference>
<dbReference type="InterPro" id="IPR011050">
    <property type="entry name" value="Pectin_lyase_fold/virulence"/>
</dbReference>
<dbReference type="Pfam" id="PF01696">
    <property type="entry name" value="Adeno_E1B_55K"/>
    <property type="match status" value="1"/>
</dbReference>
<dbReference type="Pfam" id="PF04623">
    <property type="entry name" value="Adeno_E1B_55K_N"/>
    <property type="match status" value="1"/>
</dbReference>
<dbReference type="SUPFAM" id="SSF51126">
    <property type="entry name" value="Pectin lyase-like"/>
    <property type="match status" value="1"/>
</dbReference>
<protein>
    <recommendedName>
        <fullName>E1B 55 kDa protein</fullName>
        <shortName>E1B-55K</shortName>
    </recommendedName>
    <alternativeName>
        <fullName>E1B protein, large T-antigen</fullName>
    </alternativeName>
    <alternativeName>
        <fullName>E1B-495R</fullName>
    </alternativeName>
</protein>
<organismHost>
    <name type="scientific">Homo sapiens</name>
    <name type="common">Human</name>
    <dbReference type="NCBI Taxonomy" id="9606"/>
</organismHost>
<sequence length="472" mass="52157">MERPNPSVGGIYSGLHDNGPVENPAAEEEGLRLLAGAASARSGSSAGGGGGGGGGGEPEGRSGSSNGIVTEPDPEEGTSSGQRGEKRKLENDGADFLKELTLSLMSRCYPESVWWADLEDEFKNGNMNLLYKYGFEQLKTHWMEPWEDWELALNMFAKVALRPDTIYTIKKTVNIRKCAYVIGNGAVVRFQTFDRVVFNCAMQSLGPGVIGMSGVTFNNVRFAADGFNGKVFASTTQLTLHGVFFQNCSGVCVDSWGRVSARGCTFVGCWKGLVGQNKSQMSVKKCVFERCILAMVVEGQARIRHNAGSENVCFLLLKGTASVKHNMICGTGHSQLLTCADGNCQTLKVIHVVSHQRRPWPVFEHNMLMRCTMHLGARRGMFSPYQSNFCHTKVLMETDAFSRVWWSGVFDLTIELYKVVRYDELKARCRPCECGANHIRLYPATLNVTEQLRTDHQMLSCLRTDYESSDED</sequence>
<organism>
    <name type="scientific">Human adenovirus F serotype 41</name>
    <name type="common">HAdV-41</name>
    <name type="synonym">Human adenovirus 41</name>
    <dbReference type="NCBI Taxonomy" id="10524"/>
    <lineage>
        <taxon>Viruses</taxon>
        <taxon>Varidnaviria</taxon>
        <taxon>Bamfordvirae</taxon>
        <taxon>Preplasmiviricota</taxon>
        <taxon>Tectiliviricetes</taxon>
        <taxon>Rowavirales</taxon>
        <taxon>Adenoviridae</taxon>
        <taxon>Mastadenovirus</taxon>
        <taxon>Human mastadenovirus F</taxon>
    </lineage>
</organism>
<comment type="function">
    <text evidence="1">Plays a major role to prevent cellular inhibition of viral genome replication. Assembles an SCF-like E3 ubiquitin ligase complex based on the cellular proteins ELOB, ELOC, CUL5 and RBX1, in cooperation with viral E4orf6. This viral RING-type ligase ubiquitinates cellular substrates and targets them to proteasomal degradation: TP53/p53, LIG4, MRE11-RAD50-NBS1 (MRN) complex, ITGA3, DAXX and BLM. E1B-55K probably acts as the substrate-specific adapter of the SCF-like E3 ubiquitin ligase complex. Degradation of host TP53/p53 activity is essential for preventing E1A-induced TP53 accumulation that would otherwise lead to cell apoptosis and growth arrest. E1B-55K also inactivates TP53 transcription-factor activity by binding its transactivation domain. E1B-55K also functions as a SUMO1 E3 ligase for TP53 which causes the latter to be sequestered in promyelocytic leukemia (PML) nuclear bodies thereby contributing to maximal inhibition of TP53 function.</text>
</comment>
<comment type="subunit">
    <text evidence="1 2">Interacts with host PML-4 and PML-5; this interaction promotes efficient subnuclear targeting of E1B-55K to PML nuclear bodies. Interacts with E4-ORF3 protein (By similarity). Interacts with E4-ORF6 protein (By similarity).</text>
</comment>
<comment type="subcellular location">
    <subcellularLocation>
        <location evidence="1">Host nucleus</location>
    </subcellularLocation>
    <subcellularLocation>
        <location evidence="1">Host cytoplasm</location>
    </subcellularLocation>
    <text evidence="1">Colocalizes with host TP53 to host PML nuclear bodies. PML localization of E1B-55K is necessary for E1B-55K-dependent SUMOylation of TP53.</text>
</comment>
<comment type="domain">
    <text evidence="1">Contains a PML interaction motif that allows the subnuclear PML localization.</text>
</comment>
<comment type="similarity">
    <text evidence="4">Belongs to the adenoviridae E1B 55 kDa protein family.</text>
</comment>
<evidence type="ECO:0000250" key="1">
    <source>
        <dbReference type="UniProtKB" id="P03243"/>
    </source>
</evidence>
<evidence type="ECO:0000250" key="2">
    <source>
        <dbReference type="UniProtKB" id="P03244"/>
    </source>
</evidence>
<evidence type="ECO:0000256" key="3">
    <source>
        <dbReference type="SAM" id="MobiDB-lite"/>
    </source>
</evidence>
<evidence type="ECO:0000305" key="4"/>
<accession>P10546</accession>